<evidence type="ECO:0000250" key="1"/>
<evidence type="ECO:0000250" key="2">
    <source>
        <dbReference type="UniProtKB" id="P56211"/>
    </source>
</evidence>
<evidence type="ECO:0000250" key="3">
    <source>
        <dbReference type="UniProtKB" id="Q28055"/>
    </source>
</evidence>
<evidence type="ECO:0000256" key="4">
    <source>
        <dbReference type="SAM" id="MobiDB-lite"/>
    </source>
</evidence>
<evidence type="ECO:0000269" key="5">
    <source>
    </source>
</evidence>
<evidence type="ECO:0000269" key="6">
    <source>
    </source>
</evidence>
<evidence type="ECO:0000269" key="7">
    <source>
    </source>
</evidence>
<evidence type="ECO:0000269" key="8">
    <source>
    </source>
</evidence>
<evidence type="ECO:0000305" key="9"/>
<evidence type="ECO:0007744" key="10">
    <source>
    </source>
</evidence>
<proteinExistence type="evidence at protein level"/>
<feature type="initiator methionine" description="Removed" evidence="3">
    <location>
        <position position="1"/>
    </location>
</feature>
<feature type="chain" id="PRO_0000235988" description="cAMP-regulated phosphoprotein 19">
    <location>
        <begin position="2"/>
        <end position="112"/>
    </location>
</feature>
<feature type="region of interest" description="Disordered" evidence="4">
    <location>
        <begin position="1"/>
        <end position="49"/>
    </location>
</feature>
<feature type="region of interest" description="Disordered" evidence="4">
    <location>
        <begin position="74"/>
        <end position="112"/>
    </location>
</feature>
<feature type="compositionally biased region" description="Low complexity" evidence="4">
    <location>
        <begin position="1"/>
        <end position="11"/>
    </location>
</feature>
<feature type="compositionally biased region" description="Basic and acidic residues" evidence="4">
    <location>
        <begin position="12"/>
        <end position="32"/>
    </location>
</feature>
<feature type="modified residue" description="N-acetylserine" evidence="3">
    <location>
        <position position="2"/>
    </location>
</feature>
<feature type="modified residue" description="Phosphoserine" evidence="10">
    <location>
        <position position="2"/>
    </location>
</feature>
<feature type="modified residue" description="Phosphoserine" evidence="2">
    <location>
        <position position="23"/>
    </location>
</feature>
<feature type="modified residue" description="Phosphoserine; by GWL" evidence="2">
    <location>
        <position position="62"/>
    </location>
</feature>
<feature type="modified residue" description="Phosphoserine; by GWL" evidence="2">
    <location>
        <position position="104"/>
    </location>
</feature>
<feature type="modified residue" description="Phosphoserine; by PKA" evidence="5">
    <location>
        <position position="104"/>
    </location>
</feature>
<feature type="modified residue" description="N6-acetyllysine" evidence="2">
    <location>
        <position position="109"/>
    </location>
</feature>
<feature type="splice variant" id="VSP_018558" description="In isoform ARPP-16." evidence="9">
    <location>
        <begin position="1"/>
        <end position="16"/>
    </location>
</feature>
<feature type="modified residue" description="N-acetylmethionine" evidence="3">
    <location sequence="Q712U5-2">
        <position position="1"/>
    </location>
</feature>
<keyword id="KW-0007">Acetylation</keyword>
<keyword id="KW-0025">Alternative splicing</keyword>
<keyword id="KW-0131">Cell cycle</keyword>
<keyword id="KW-0132">Cell division</keyword>
<keyword id="KW-0963">Cytoplasm</keyword>
<keyword id="KW-0903">Direct protein sequencing</keyword>
<keyword id="KW-0498">Mitosis</keyword>
<keyword id="KW-0597">Phosphoprotein</keyword>
<keyword id="KW-0650">Protein phosphatase inhibitor</keyword>
<keyword id="KW-1185">Reference proteome</keyword>
<gene>
    <name type="primary">Arpp19</name>
</gene>
<organism>
    <name type="scientific">Rattus norvegicus</name>
    <name type="common">Rat</name>
    <dbReference type="NCBI Taxonomy" id="10116"/>
    <lineage>
        <taxon>Eukaryota</taxon>
        <taxon>Metazoa</taxon>
        <taxon>Chordata</taxon>
        <taxon>Craniata</taxon>
        <taxon>Vertebrata</taxon>
        <taxon>Euteleostomi</taxon>
        <taxon>Mammalia</taxon>
        <taxon>Eutheria</taxon>
        <taxon>Euarchontoglires</taxon>
        <taxon>Glires</taxon>
        <taxon>Rodentia</taxon>
        <taxon>Myomorpha</taxon>
        <taxon>Muroidea</taxon>
        <taxon>Muridae</taxon>
        <taxon>Murinae</taxon>
        <taxon>Rattus</taxon>
    </lineage>
</organism>
<name>ARP19_RAT</name>
<protein>
    <recommendedName>
        <fullName evidence="2">cAMP-regulated phosphoprotein 19</fullName>
        <shortName>ARPP-19</shortName>
    </recommendedName>
</protein>
<accession>Q712U5</accession>
<dbReference type="EMBL" id="AJ005982">
    <property type="protein sequence ID" value="CAA06796.1"/>
    <property type="molecule type" value="mRNA"/>
</dbReference>
<dbReference type="EMBL" id="BC058461">
    <property type="protein sequence ID" value="AAH58461.1"/>
    <property type="molecule type" value="mRNA"/>
</dbReference>
<dbReference type="RefSeq" id="NP_001382647.1">
    <molecule id="Q712U5-1"/>
    <property type="nucleotide sequence ID" value="NM_001395718.1"/>
</dbReference>
<dbReference type="RefSeq" id="NP_001382648.1">
    <molecule id="Q712U5-1"/>
    <property type="nucleotide sequence ID" value="NM_001395719.1"/>
</dbReference>
<dbReference type="RefSeq" id="NP_113848.1">
    <molecule id="Q712U5-1"/>
    <property type="nucleotide sequence ID" value="NM_031660.2"/>
</dbReference>
<dbReference type="RefSeq" id="XP_002727150.2">
    <property type="nucleotide sequence ID" value="XM_002727104.4"/>
</dbReference>
<dbReference type="RefSeq" id="XP_002730018.2">
    <property type="nucleotide sequence ID" value="XM_002729972.4"/>
</dbReference>
<dbReference type="BMRB" id="Q712U5"/>
<dbReference type="SMR" id="Q712U5"/>
<dbReference type="FunCoup" id="Q712U5">
    <property type="interactions" value="3150"/>
</dbReference>
<dbReference type="STRING" id="10116.ENSRNOP00000035534"/>
<dbReference type="BindingDB" id="Q712U5"/>
<dbReference type="ChEMBL" id="CHEMBL2170"/>
<dbReference type="iPTMnet" id="Q712U5"/>
<dbReference type="PhosphoSitePlus" id="Q712U5"/>
<dbReference type="jPOST" id="Q712U5"/>
<dbReference type="PaxDb" id="10116-ENSRNOP00000028470"/>
<dbReference type="Ensembl" id="ENSRNOT00000030221.7">
    <molecule id="Q712U5-1"/>
    <property type="protein sequence ID" value="ENSRNOP00000035534.6"/>
    <property type="gene ID" value="ENSRNOG00000023086.7"/>
</dbReference>
<dbReference type="GeneID" id="60336"/>
<dbReference type="KEGG" id="rno:60336"/>
<dbReference type="UCSC" id="RGD:71054">
    <molecule id="Q712U5-1"/>
    <property type="organism name" value="rat"/>
</dbReference>
<dbReference type="AGR" id="RGD:71054"/>
<dbReference type="CTD" id="10776"/>
<dbReference type="RGD" id="71054">
    <property type="gene designation" value="Arpp19"/>
</dbReference>
<dbReference type="eggNOG" id="KOG4076">
    <property type="taxonomic scope" value="Eukaryota"/>
</dbReference>
<dbReference type="GeneTree" id="ENSGT00940000154555"/>
<dbReference type="HOGENOM" id="CLU_125025_1_0_1"/>
<dbReference type="InParanoid" id="Q712U5"/>
<dbReference type="OMA" id="QMAKQKY"/>
<dbReference type="PhylomeDB" id="Q712U5"/>
<dbReference type="Reactome" id="R-RNO-2465910">
    <property type="pathway name" value="MASTL Facilitates Mitotic Progression"/>
</dbReference>
<dbReference type="PRO" id="PR:Q712U5"/>
<dbReference type="Proteomes" id="UP000002494">
    <property type="component" value="Chromosome 8"/>
</dbReference>
<dbReference type="Bgee" id="ENSRNOG00000023086">
    <property type="expression patterns" value="Expressed in pancreas and 20 other cell types or tissues"/>
</dbReference>
<dbReference type="GO" id="GO:0005737">
    <property type="term" value="C:cytoplasm"/>
    <property type="evidence" value="ECO:0000318"/>
    <property type="project" value="GO_Central"/>
</dbReference>
<dbReference type="GO" id="GO:0005829">
    <property type="term" value="C:cytosol"/>
    <property type="evidence" value="ECO:0000314"/>
    <property type="project" value="RGD"/>
</dbReference>
<dbReference type="GO" id="GO:0030425">
    <property type="term" value="C:dendrite"/>
    <property type="evidence" value="ECO:0000314"/>
    <property type="project" value="RGD"/>
</dbReference>
<dbReference type="GO" id="GO:0045202">
    <property type="term" value="C:synapse"/>
    <property type="evidence" value="ECO:0000314"/>
    <property type="project" value="RGD"/>
</dbReference>
<dbReference type="GO" id="GO:0019212">
    <property type="term" value="F:phosphatase inhibitor activity"/>
    <property type="evidence" value="ECO:0000250"/>
    <property type="project" value="UniProtKB"/>
</dbReference>
<dbReference type="GO" id="GO:0015459">
    <property type="term" value="F:potassium channel regulator activity"/>
    <property type="evidence" value="ECO:0000266"/>
    <property type="project" value="RGD"/>
</dbReference>
<dbReference type="GO" id="GO:0051721">
    <property type="term" value="F:protein phosphatase 2A binding"/>
    <property type="evidence" value="ECO:0000250"/>
    <property type="project" value="UniProtKB"/>
</dbReference>
<dbReference type="GO" id="GO:0004864">
    <property type="term" value="F:protein phosphatase inhibitor activity"/>
    <property type="evidence" value="ECO:0000266"/>
    <property type="project" value="RGD"/>
</dbReference>
<dbReference type="GO" id="GO:0019888">
    <property type="term" value="F:protein phosphatase regulator activity"/>
    <property type="evidence" value="ECO:0000250"/>
    <property type="project" value="UniProtKB"/>
</dbReference>
<dbReference type="GO" id="GO:0005102">
    <property type="term" value="F:signaling receptor binding"/>
    <property type="evidence" value="ECO:0000266"/>
    <property type="project" value="RGD"/>
</dbReference>
<dbReference type="GO" id="GO:0051301">
    <property type="term" value="P:cell division"/>
    <property type="evidence" value="ECO:0007669"/>
    <property type="project" value="UniProtKB-KW"/>
</dbReference>
<dbReference type="GO" id="GO:0000086">
    <property type="term" value="P:G2/M transition of mitotic cell cycle"/>
    <property type="evidence" value="ECO:0000250"/>
    <property type="project" value="UniProtKB"/>
</dbReference>
<dbReference type="GO" id="GO:0000278">
    <property type="term" value="P:mitotic cell cycle"/>
    <property type="evidence" value="ECO:0000250"/>
    <property type="project" value="UniProtKB"/>
</dbReference>
<dbReference type="GO" id="GO:0045722">
    <property type="term" value="P:positive regulation of gluconeogenesis"/>
    <property type="evidence" value="ECO:0000266"/>
    <property type="project" value="RGD"/>
</dbReference>
<dbReference type="GO" id="GO:0046579">
    <property type="term" value="P:positive regulation of Ras protein signal transduction"/>
    <property type="evidence" value="ECO:0000314"/>
    <property type="project" value="RGD"/>
</dbReference>
<dbReference type="InterPro" id="IPR006760">
    <property type="entry name" value="Endosulphine"/>
</dbReference>
<dbReference type="PANTHER" id="PTHR10358:SF4">
    <property type="entry name" value="CAMP-REGULATED PHOSPHOPROTEIN 19"/>
    <property type="match status" value="1"/>
</dbReference>
<dbReference type="PANTHER" id="PTHR10358">
    <property type="entry name" value="ENDOSULFINE"/>
    <property type="match status" value="1"/>
</dbReference>
<dbReference type="Pfam" id="PF04667">
    <property type="entry name" value="Endosulfine"/>
    <property type="match status" value="1"/>
</dbReference>
<reference key="1">
    <citation type="submission" date="1998-05" db="EMBL/GenBank/DDBJ databases">
        <authorList>
            <person name="Bataille D."/>
        </authorList>
    </citation>
    <scope>NUCLEOTIDE SEQUENCE [MRNA] (ISOFORM ARPP-19)</scope>
    <source>
        <tissue>Brain</tissue>
    </source>
</reference>
<reference key="2">
    <citation type="journal article" date="2004" name="Genome Res.">
        <title>The status, quality, and expansion of the NIH full-length cDNA project: the Mammalian Gene Collection (MGC).</title>
        <authorList>
            <consortium name="The MGC Project Team"/>
        </authorList>
    </citation>
    <scope>NUCLEOTIDE SEQUENCE [LARGE SCALE MRNA] (ISOFORM ARPP-19)</scope>
    <source>
        <tissue>Pituitary</tissue>
    </source>
</reference>
<reference key="3">
    <citation type="journal article" date="2002" name="Proc. Natl. Acad. Sci. U.S.A.">
        <title>Nerve growth factor controls GAP-43 mRNA stability via the phosphoprotein ARPP-19.</title>
        <authorList>
            <person name="Irwin N."/>
            <person name="Chao S."/>
            <person name="Goritchenko L."/>
            <person name="Horiuchi A."/>
            <person name="Greengard P."/>
            <person name="Nairn A.C."/>
            <person name="Benowitz L.I."/>
        </authorList>
    </citation>
    <scope>PROTEIN SEQUENCE OF 59-69 (ISOFORMS ARPP-16/ARPP-19)</scope>
    <scope>FUNCTION</scope>
</reference>
<reference key="4">
    <citation type="journal article" date="1990" name="J. Neurosci.">
        <title>Differential expression of ARPP-16 and ARPP-19, two highly related cAMP-regulated phosphoproteins, one of which is specifically associated with dopamine-innervated brain regions.</title>
        <authorList>
            <person name="Girault J.-A."/>
            <person name="Horiuchi A."/>
            <person name="Gustafson E.L."/>
            <person name="Rosen N.L."/>
            <person name="Greengard P."/>
        </authorList>
    </citation>
    <scope>TISSUE SPECIFICITY</scope>
    <scope>SUBCELLULAR LOCATION</scope>
</reference>
<reference key="5">
    <citation type="journal article" date="2001" name="J. Neurochem.">
        <title>ARPP-16/ARPP-19: a highly conserved family of cAMP-regulated phosphoproteins.</title>
        <authorList>
            <person name="Dulubova I."/>
            <person name="Horiuchi A."/>
            <person name="Snyder G.L."/>
            <person name="Girault J.-A."/>
            <person name="Czernik A.J."/>
            <person name="Shao L."/>
            <person name="Ramabhadran R."/>
            <person name="Greengard P."/>
            <person name="Nairn A.C."/>
        </authorList>
    </citation>
    <scope>PHOSPHORYLATION AT SER-104</scope>
</reference>
<reference key="6">
    <citation type="journal article" date="2003" name="J. Biochem.">
        <title>Expression of ARPP-16/19 in rat denervated skeletal muscle.</title>
        <authorList>
            <person name="Yoshikawa A."/>
            <person name="Mitsuhashi H."/>
            <person name="Sasagawa N."/>
            <person name="Tsukahara T."/>
            <person name="Hayashi Y."/>
            <person name="Nishino I."/>
            <person name="Goto Y."/>
            <person name="Ishiura S."/>
        </authorList>
    </citation>
    <scope>INDUCTION BY DENERVATION</scope>
    <scope>SUBCELLULAR LOCATION</scope>
</reference>
<reference key="7">
    <citation type="journal article" date="2012" name="Nat. Commun.">
        <title>Quantitative maps of protein phosphorylation sites across 14 different rat organs and tissues.</title>
        <authorList>
            <person name="Lundby A."/>
            <person name="Secher A."/>
            <person name="Lage K."/>
            <person name="Nordsborg N.B."/>
            <person name="Dmytriyev A."/>
            <person name="Lundby C."/>
            <person name="Olsen J.V."/>
        </authorList>
    </citation>
    <scope>PHOSPHORYLATION [LARGE SCALE ANALYSIS] AT SER-2</scope>
    <scope>IDENTIFICATION BY MASS SPECTROMETRY [LARGE SCALE ANALYSIS]</scope>
</reference>
<comment type="function">
    <text evidence="2 6">Protein phosphatase inhibitor that specifically inhibits protein phosphatase 2A (PP2A) during mitosis (By similarity). Inhibition of PP2A is enhanced when ARPP19 is phosphorylated (By similarity). When phosphorylated at Ser-62 during mitosis, specifically interacts with PPP2R2D (PR55-delta) and inhibits its activity, leading to inactivation of PP2A, an essential condition to keep cyclin-B1-CDK1 activity high during M phase (By similarity). May indirectly enhance GAP43 expression by binding to the NGF-regulatory region of its mRNA (PubMed:12221279).</text>
</comment>
<comment type="subunit">
    <text evidence="2">Interacts (when phosphorylated at Ser-62) with PPP2R2D. Interacts with SNCA (By similarity). Interacts with PPP2R2A; the interaction is direct and this interaction inhibits PP2A activity (By similarity).</text>
</comment>
<comment type="subcellular location">
    <subcellularLocation>
        <location evidence="7 8">Cytoplasm</location>
    </subcellularLocation>
</comment>
<comment type="alternative products">
    <event type="alternative splicing"/>
    <isoform>
        <id>Q712U5-1</id>
        <name>ARPP-19</name>
        <sequence type="displayed"/>
    </isoform>
    <isoform>
        <id>Q712U5-2</id>
        <name>ARPP-16</name>
        <sequence type="described" ref="VSP_018558"/>
    </isoform>
</comment>
<comment type="tissue specificity">
    <text evidence="8">Whereas isoform ARPP-19 is ubiquitously expressed, isoform ARPP-16 is found only in selected brain neurons.</text>
</comment>
<comment type="induction">
    <text evidence="7">Up-regulated in denervated skeletal muscle (at protein level).</text>
</comment>
<comment type="PTM">
    <text evidence="1 5">Phosphorylation at Ser-62 by MASTL/GWL during mitosis is essential for interaction with PPP2R2D (PR55-delta) and subsequent inactivation of PP2A (By similarity). Phosphorylated by PKA.</text>
</comment>
<comment type="similarity">
    <text evidence="9">Belongs to the endosulfine family.</text>
</comment>
<sequence>MSAEVPEAASAEEQKEMEDKVTSPEKAEEAKLKARYPHLGQKPGGSDFLRKRLQKGQKYFDSGDYNMAKAKMKNKQLPAAAPDKTEVTGDHIPTPQDLPQRKPSLVASKLAG</sequence>